<evidence type="ECO:0000250" key="1">
    <source>
        <dbReference type="UniProtKB" id="Q8TBR7"/>
    </source>
</evidence>
<evidence type="ECO:0000255" key="2"/>
<evidence type="ECO:0000255" key="3">
    <source>
        <dbReference type="PROSITE-ProRule" id="PRU00205"/>
    </source>
</evidence>
<evidence type="ECO:0000305" key="4"/>
<gene>
    <name type="primary">Tlcd3a</name>
    <name type="synonym">Fam57a</name>
</gene>
<reference key="1">
    <citation type="journal article" date="2009" name="PLoS Biol.">
        <title>Lineage-specific biology revealed by a finished genome assembly of the mouse.</title>
        <authorList>
            <person name="Church D.M."/>
            <person name="Goodstadt L."/>
            <person name="Hillier L.W."/>
            <person name="Zody M.C."/>
            <person name="Goldstein S."/>
            <person name="She X."/>
            <person name="Bult C.J."/>
            <person name="Agarwala R."/>
            <person name="Cherry J.L."/>
            <person name="DiCuccio M."/>
            <person name="Hlavina W."/>
            <person name="Kapustin Y."/>
            <person name="Meric P."/>
            <person name="Maglott D."/>
            <person name="Birtle Z."/>
            <person name="Marques A.C."/>
            <person name="Graves T."/>
            <person name="Zhou S."/>
            <person name="Teague B."/>
            <person name="Potamousis K."/>
            <person name="Churas C."/>
            <person name="Place M."/>
            <person name="Herschleb J."/>
            <person name="Runnheim R."/>
            <person name="Forrest D."/>
            <person name="Amos-Landgraf J."/>
            <person name="Schwartz D.C."/>
            <person name="Cheng Z."/>
            <person name="Lindblad-Toh K."/>
            <person name="Eichler E.E."/>
            <person name="Ponting C.P."/>
        </authorList>
    </citation>
    <scope>NUCLEOTIDE SEQUENCE [LARGE SCALE GENOMIC DNA]</scope>
    <source>
        <strain>C57BL/6J</strain>
    </source>
</reference>
<feature type="chain" id="PRO_0000185541" description="TLC domain-containing protein 3A">
    <location>
        <begin position="1"/>
        <end position="257"/>
    </location>
</feature>
<feature type="transmembrane region" description="Helical" evidence="2">
    <location>
        <begin position="1"/>
        <end position="21"/>
    </location>
</feature>
<feature type="transmembrane region" description="Helical" evidence="2">
    <location>
        <begin position="42"/>
        <end position="62"/>
    </location>
</feature>
<feature type="transmembrane region" description="Helical" evidence="2">
    <location>
        <begin position="71"/>
        <end position="91"/>
    </location>
</feature>
<feature type="transmembrane region" description="Helical" evidence="2">
    <location>
        <begin position="114"/>
        <end position="134"/>
    </location>
</feature>
<feature type="transmembrane region" description="Helical" evidence="2">
    <location>
        <begin position="142"/>
        <end position="162"/>
    </location>
</feature>
<feature type="transmembrane region" description="Helical" evidence="2">
    <location>
        <begin position="181"/>
        <end position="201"/>
    </location>
</feature>
<feature type="transmembrane region" description="Helical" evidence="2">
    <location>
        <begin position="220"/>
        <end position="240"/>
    </location>
</feature>
<feature type="domain" description="TLC" evidence="3">
    <location>
        <begin position="33"/>
        <end position="249"/>
    </location>
</feature>
<dbReference type="EMBL" id="AL591129">
    <property type="status" value="NOT_ANNOTATED_CDS"/>
    <property type="molecule type" value="Genomic_DNA"/>
</dbReference>
<dbReference type="CCDS" id="CCDS36230.1"/>
<dbReference type="RefSeq" id="NP_082049.1">
    <property type="nucleotide sequence ID" value="NM_027773.4"/>
</dbReference>
<dbReference type="SMR" id="Q5ND56"/>
<dbReference type="FunCoup" id="Q5ND56">
    <property type="interactions" value="1359"/>
</dbReference>
<dbReference type="STRING" id="10090.ENSMUSP00000091553"/>
<dbReference type="PhosphoSitePlus" id="Q5ND56"/>
<dbReference type="PaxDb" id="10090-ENSMUSP00000091553"/>
<dbReference type="ProteomicsDB" id="266825"/>
<dbReference type="Antibodypedia" id="77439">
    <property type="antibodies" value="3 antibodies from 2 providers"/>
</dbReference>
<dbReference type="Ensembl" id="ENSMUST00000094014.10">
    <property type="protein sequence ID" value="ENSMUSP00000091553.4"/>
    <property type="gene ID" value="ENSMUSG00000069808.14"/>
</dbReference>
<dbReference type="GeneID" id="116972"/>
<dbReference type="KEGG" id="mmu:116972"/>
<dbReference type="UCSC" id="uc007kfg.2">
    <property type="organism name" value="mouse"/>
</dbReference>
<dbReference type="AGR" id="MGI:2151840"/>
<dbReference type="CTD" id="79850"/>
<dbReference type="MGI" id="MGI:2151840">
    <property type="gene designation" value="Tlcd3a"/>
</dbReference>
<dbReference type="VEuPathDB" id="HostDB:ENSMUSG00000069808"/>
<dbReference type="eggNOG" id="KOG4561">
    <property type="taxonomic scope" value="Eukaryota"/>
</dbReference>
<dbReference type="GeneTree" id="ENSGT01010000222313"/>
<dbReference type="InParanoid" id="Q5ND56"/>
<dbReference type="OMA" id="IYDRHWL"/>
<dbReference type="OrthoDB" id="10266980at2759"/>
<dbReference type="PhylomeDB" id="Q5ND56"/>
<dbReference type="TreeFam" id="TF324847"/>
<dbReference type="BioGRID-ORCS" id="116972">
    <property type="hits" value="2 hits in 79 CRISPR screens"/>
</dbReference>
<dbReference type="ChiTaRS" id="Fam57a">
    <property type="organism name" value="mouse"/>
</dbReference>
<dbReference type="PRO" id="PR:Q5ND56"/>
<dbReference type="Proteomes" id="UP000000589">
    <property type="component" value="Chromosome 11"/>
</dbReference>
<dbReference type="RNAct" id="Q5ND56">
    <property type="molecule type" value="protein"/>
</dbReference>
<dbReference type="Bgee" id="ENSMUSG00000069808">
    <property type="expression patterns" value="Expressed in esophagus and 175 other cell types or tissues"/>
</dbReference>
<dbReference type="ExpressionAtlas" id="Q5ND56">
    <property type="expression patterns" value="baseline and differential"/>
</dbReference>
<dbReference type="GO" id="GO:0005886">
    <property type="term" value="C:plasma membrane"/>
    <property type="evidence" value="ECO:0007669"/>
    <property type="project" value="UniProtKB-SubCell"/>
</dbReference>
<dbReference type="InterPro" id="IPR006634">
    <property type="entry name" value="TLC-dom"/>
</dbReference>
<dbReference type="InterPro" id="IPR050846">
    <property type="entry name" value="TLCD"/>
</dbReference>
<dbReference type="PANTHER" id="PTHR13439">
    <property type="entry name" value="CT120 PROTEIN"/>
    <property type="match status" value="1"/>
</dbReference>
<dbReference type="PANTHER" id="PTHR13439:SF20">
    <property type="entry name" value="TLC DOMAIN-CONTAINING PROTEIN 3A"/>
    <property type="match status" value="1"/>
</dbReference>
<dbReference type="Pfam" id="PF03798">
    <property type="entry name" value="TRAM_LAG1_CLN8"/>
    <property type="match status" value="1"/>
</dbReference>
<dbReference type="SMART" id="SM00724">
    <property type="entry name" value="TLC"/>
    <property type="match status" value="1"/>
</dbReference>
<dbReference type="PROSITE" id="PS50922">
    <property type="entry name" value="TLC"/>
    <property type="match status" value="1"/>
</dbReference>
<protein>
    <recommendedName>
        <fullName evidence="4">TLC domain-containing protein 3A</fullName>
    </recommendedName>
    <alternativeName>
        <fullName>Protein FAM57A</fullName>
    </alternativeName>
</protein>
<keyword id="KW-1003">Cell membrane</keyword>
<keyword id="KW-0472">Membrane</keyword>
<keyword id="KW-1185">Reference proteome</keyword>
<keyword id="KW-0812">Transmembrane</keyword>
<keyword id="KW-1133">Transmembrane helix</keyword>
<proteinExistence type="inferred from homology"/>
<comment type="subunit">
    <text evidence="1">Interacts with GGT7 isoform 3 and SLC3A2.</text>
</comment>
<comment type="subcellular location">
    <subcellularLocation>
        <location evidence="1">Cell membrane</location>
        <topology evidence="1">Multi-pass membrane protein</topology>
    </subcellularLocation>
</comment>
<accession>Q5ND56</accession>
<organism>
    <name type="scientific">Mus musculus</name>
    <name type="common">Mouse</name>
    <dbReference type="NCBI Taxonomy" id="10090"/>
    <lineage>
        <taxon>Eukaryota</taxon>
        <taxon>Metazoa</taxon>
        <taxon>Chordata</taxon>
        <taxon>Craniata</taxon>
        <taxon>Vertebrata</taxon>
        <taxon>Euteleostomi</taxon>
        <taxon>Mammalia</taxon>
        <taxon>Eutheria</taxon>
        <taxon>Euarchontoglires</taxon>
        <taxon>Glires</taxon>
        <taxon>Rodentia</taxon>
        <taxon>Myomorpha</taxon>
        <taxon>Muroidea</taxon>
        <taxon>Muridae</taxon>
        <taxon>Murinae</taxon>
        <taxon>Mus</taxon>
        <taxon>Mus</taxon>
    </lineage>
</organism>
<name>TLC3A_MOUSE</name>
<sequence>MLLTLASGALFFPGLFALSIWALHRLRPGWTEDDCLTVGTRLVSSVQAVLATWAGLTVIISCKNVVSDRHWLATEYVWFLIPYMIYDFYAMYCCERCRTKSQKLTRTTIIRNFLIENRLMVTHHTVILLFLVPISQKLRGDLGDFFVGCIFTAELSTPFVSLARIMIQLKQQHTLLYKVNGILTVTTFLFCRILLFPFMYWSYGQQKGLSLLQVPFNIPLHCNMANAVLISPQLYWFSLLCKKAARLFDTAKAKKDG</sequence>